<gene>
    <name type="primary">MCM1</name>
    <name type="synonym">FUN80</name>
    <name type="ordered locus">YMR043W</name>
    <name type="ORF">YM9532.08</name>
</gene>
<name>MCM1_YEAST</name>
<feature type="initiator methionine" description="Removed" evidence="12">
    <location>
        <position position="1"/>
    </location>
</feature>
<feature type="chain" id="PRO_0000199439" description="Pheromone receptor transcription factor">
    <location>
        <begin position="2"/>
        <end position="286"/>
    </location>
</feature>
<feature type="domain" description="MADS-box" evidence="1">
    <location>
        <begin position="18"/>
        <end position="72"/>
    </location>
</feature>
<feature type="region of interest" description="Disordered" evidence="2">
    <location>
        <begin position="97"/>
        <end position="137"/>
    </location>
</feature>
<feature type="region of interest" description="Disordered" evidence="2">
    <location>
        <begin position="167"/>
        <end position="264"/>
    </location>
</feature>
<feature type="compositionally biased region" description="Acidic residues" evidence="2">
    <location>
        <begin position="97"/>
        <end position="119"/>
    </location>
</feature>
<feature type="compositionally biased region" description="Low complexity" evidence="2">
    <location>
        <begin position="122"/>
        <end position="136"/>
    </location>
</feature>
<feature type="compositionally biased region" description="Low complexity" evidence="2">
    <location>
        <begin position="171"/>
        <end position="246"/>
    </location>
</feature>
<feature type="modified residue" description="N-acetylserine" evidence="12">
    <location>
        <position position="2"/>
    </location>
</feature>
<feature type="modified residue" description="Phosphoserine" evidence="10">
    <location>
        <position position="2"/>
    </location>
</feature>
<feature type="modified residue" description="Phosphoserine" evidence="11">
    <location>
        <position position="144"/>
    </location>
</feature>
<feature type="sequence conflict" description="In Ref. 3; AAA34609." evidence="9" ref="3">
    <original>P</original>
    <variation>S</variation>
    <location>
        <position position="9"/>
    </location>
</feature>
<feature type="sequence conflict" description="In Ref. 3; AAA34609." evidence="9" ref="3">
    <original>S</original>
    <variation>F</variation>
    <location>
        <position position="37"/>
    </location>
</feature>
<feature type="sequence conflict" description="In Ref. 3; AAA34609." evidence="9" ref="3">
    <original>GA</original>
    <variation>AR</variation>
    <location>
        <begin position="156"/>
        <end position="157"/>
    </location>
</feature>
<feature type="sequence conflict" description="In Ref. 3; AAA34609." evidence="9" ref="3">
    <location>
        <begin position="158"/>
        <end position="286"/>
    </location>
</feature>
<feature type="helix" evidence="13">
    <location>
        <begin position="29"/>
        <end position="54"/>
    </location>
</feature>
<feature type="strand" evidence="13">
    <location>
        <begin position="57"/>
        <end position="63"/>
    </location>
</feature>
<feature type="strand" evidence="13">
    <location>
        <begin position="69"/>
        <end position="73"/>
    </location>
</feature>
<feature type="turn" evidence="13">
    <location>
        <begin position="75"/>
        <end position="78"/>
    </location>
</feature>
<feature type="helix" evidence="13">
    <location>
        <begin position="79"/>
        <end position="82"/>
    </location>
</feature>
<feature type="helix" evidence="13">
    <location>
        <begin position="84"/>
        <end position="94"/>
    </location>
</feature>
<keyword id="KW-0002">3D-structure</keyword>
<keyword id="KW-0007">Acetylation</keyword>
<keyword id="KW-0010">Activator</keyword>
<keyword id="KW-0056">Arginine metabolism</keyword>
<keyword id="KW-0131">Cell cycle</keyword>
<keyword id="KW-0238">DNA-binding</keyword>
<keyword id="KW-0539">Nucleus</keyword>
<keyword id="KW-0597">Phosphoprotein</keyword>
<keyword id="KW-1185">Reference proteome</keyword>
<keyword id="KW-0804">Transcription</keyword>
<keyword id="KW-0805">Transcription regulation</keyword>
<accession>P11746</accession>
<accession>D6VZL8</accession>
<proteinExistence type="evidence at protein level"/>
<sequence length="286" mass="32802">MSDIEEGTPTNNGQQKERRKIEIKFIENKTRRHVTFSKRKHGIMKKAFELSVLTGTQVLLLVVSETGLVYTFSTPKFEPIVTQQEGRNLIQACLNAPDDEEEDEEEDGDDDDDDDDDGNDMQRQQPQQQQPQQQQQVLNAHANSLGHLNQDQVPAGALKQEVKSQLLGGANPNQNSMIQQQQHHTQNSQPQQQQQQQPQQQMSQQQMSQHPRPQQGIPHPQQSQPQQQQQQQQQLQQQQQQQQQQPLTGIHQPHQQAFANAASPYLNAEQNAAYQQYFQEPQQGQY</sequence>
<evidence type="ECO:0000255" key="1">
    <source>
        <dbReference type="PROSITE-ProRule" id="PRU00251"/>
    </source>
</evidence>
<evidence type="ECO:0000256" key="2">
    <source>
        <dbReference type="SAM" id="MobiDB-lite"/>
    </source>
</evidence>
<evidence type="ECO:0000269" key="3">
    <source>
    </source>
</evidence>
<evidence type="ECO:0000269" key="4">
    <source>
    </source>
</evidence>
<evidence type="ECO:0000269" key="5">
    <source>
    </source>
</evidence>
<evidence type="ECO:0000269" key="6">
    <source>
    </source>
</evidence>
<evidence type="ECO:0000269" key="7">
    <source>
    </source>
</evidence>
<evidence type="ECO:0000269" key="8">
    <source>
    </source>
</evidence>
<evidence type="ECO:0000305" key="9"/>
<evidence type="ECO:0007744" key="10">
    <source>
    </source>
</evidence>
<evidence type="ECO:0007744" key="11">
    <source>
    </source>
</evidence>
<evidence type="ECO:0007744" key="12">
    <source>
    </source>
</evidence>
<evidence type="ECO:0007829" key="13">
    <source>
        <dbReference type="PDB" id="1MNM"/>
    </source>
</evidence>
<comment type="function">
    <text>Transcription factor required for the efficient replication of minichromosomes and the transcriptional regulation of early cell cycle genes. Activates transcription of ECB-dependent genes during the G1/M phase. Genes that contain a ECB (early cell box) element in their transcription regulatory region are transcribed only during G1/M phases. Interacts with the alpha-2 repressor or with the alpha-1 activator thereby regulating the expression of mating-type-specific genes. With ARG80, ARG81 and ARG82, coordinates the expression of arginine anabolic and catabolic genes in response to arginine.</text>
</comment>
<comment type="subunit">
    <text evidence="3 4 6 7 8">Homodimer. Binds DNA with a high specificity in complex with mating-type protein ALPHA1. Also binds DNA with a high specificity as a heterotetramer consisting of an ALPHA2 dimer and an MCM1 dimer. Interacts with YHP1 and YOX1, possibly leading to its inactivation. Interacts with ARG80 and ARG82.</text>
</comment>
<comment type="interaction">
    <interactant intactId="EBI-10528">
        <id>P11746</id>
    </interactant>
    <interactant intactId="EBI-10443">
        <id>P0CY08</id>
        <label>MATALPHA2</label>
    </interactant>
    <organismsDiffer>false</organismsDiffer>
    <experiments>2</experiments>
</comment>
<comment type="subcellular location">
    <subcellularLocation>
        <location>Nucleus</location>
    </subcellularLocation>
</comment>
<comment type="miscellaneous">
    <text evidence="5">Present with 8970 molecules/cell in log phase SD medium.</text>
</comment>
<protein>
    <recommendedName>
        <fullName>Pheromone receptor transcription factor</fullName>
    </recommendedName>
    <alternativeName>
        <fullName>GRM/PRTF protein</fullName>
    </alternativeName>
</protein>
<dbReference type="EMBL" id="X52453">
    <property type="protein sequence ID" value="CAA36691.1"/>
    <property type="molecule type" value="Genomic_DNA"/>
</dbReference>
<dbReference type="EMBL" id="X14187">
    <property type="protein sequence ID" value="CAA32389.1"/>
    <property type="molecule type" value="Genomic_DNA"/>
</dbReference>
<dbReference type="EMBL" id="M17511">
    <property type="protein sequence ID" value="AAA34609.1"/>
    <property type="molecule type" value="Genomic_DNA"/>
</dbReference>
<dbReference type="EMBL" id="Z48502">
    <property type="protein sequence ID" value="CAA88409.1"/>
    <property type="molecule type" value="Genomic_DNA"/>
</dbReference>
<dbReference type="EMBL" id="AY557985">
    <property type="protein sequence ID" value="AAS56311.1"/>
    <property type="molecule type" value="Genomic_DNA"/>
</dbReference>
<dbReference type="EMBL" id="BK006946">
    <property type="protein sequence ID" value="DAA09942.1"/>
    <property type="molecule type" value="Genomic_DNA"/>
</dbReference>
<dbReference type="PIR" id="A34599">
    <property type="entry name" value="A34599"/>
</dbReference>
<dbReference type="RefSeq" id="NP_013757.1">
    <property type="nucleotide sequence ID" value="NM_001182540.1"/>
</dbReference>
<dbReference type="PDB" id="1MNM">
    <property type="method" value="X-ray"/>
    <property type="resolution" value="2.25 A"/>
    <property type="chains" value="A/B=1-100"/>
</dbReference>
<dbReference type="PDBsum" id="1MNM"/>
<dbReference type="SMR" id="P11746"/>
<dbReference type="BioGRID" id="35216">
    <property type="interactions" value="412"/>
</dbReference>
<dbReference type="ComplexPortal" id="CPX-1152">
    <property type="entry name" value="ARGR-MCM1 transcription regulation complex"/>
</dbReference>
<dbReference type="ComplexPortal" id="CPX-692">
    <property type="entry name" value="Mating-type MATalpha2-MCM1 complex"/>
</dbReference>
<dbReference type="ComplexPortal" id="CPX-693">
    <property type="entry name" value="Mating-type MATalpha1-MCM1 complex"/>
</dbReference>
<dbReference type="DIP" id="DIP-72N"/>
<dbReference type="FunCoup" id="P11746">
    <property type="interactions" value="1935"/>
</dbReference>
<dbReference type="IntAct" id="P11746">
    <property type="interactions" value="54"/>
</dbReference>
<dbReference type="MINT" id="P11746"/>
<dbReference type="STRING" id="4932.YMR043W"/>
<dbReference type="iPTMnet" id="P11746"/>
<dbReference type="PaxDb" id="4932-YMR043W"/>
<dbReference type="PeptideAtlas" id="P11746"/>
<dbReference type="EnsemblFungi" id="YMR043W_mRNA">
    <property type="protein sequence ID" value="YMR043W"/>
    <property type="gene ID" value="YMR043W"/>
</dbReference>
<dbReference type="GeneID" id="855060"/>
<dbReference type="KEGG" id="sce:YMR043W"/>
<dbReference type="AGR" id="SGD:S000004646"/>
<dbReference type="SGD" id="S000004646">
    <property type="gene designation" value="MCM1"/>
</dbReference>
<dbReference type="VEuPathDB" id="FungiDB:YMR043W"/>
<dbReference type="eggNOG" id="KOG0015">
    <property type="taxonomic scope" value="Eukaryota"/>
</dbReference>
<dbReference type="GeneTree" id="ENSGT00400000022158"/>
<dbReference type="HOGENOM" id="CLU_063931_2_1_1"/>
<dbReference type="InParanoid" id="P11746"/>
<dbReference type="OMA" id="HENGNNA"/>
<dbReference type="OrthoDB" id="2284405at2759"/>
<dbReference type="BioCyc" id="YEAST:G3O-32748-MONOMER"/>
<dbReference type="Reactome" id="R-SCE-9031628">
    <property type="pathway name" value="NGF-stimulated transcription"/>
</dbReference>
<dbReference type="BioGRID-ORCS" id="855060">
    <property type="hits" value="2 hits in 13 CRISPR screens"/>
</dbReference>
<dbReference type="EvolutionaryTrace" id="P11746"/>
<dbReference type="PRO" id="PR:P11746"/>
<dbReference type="Proteomes" id="UP000002311">
    <property type="component" value="Chromosome XIII"/>
</dbReference>
<dbReference type="RNAct" id="P11746">
    <property type="molecule type" value="protein"/>
</dbReference>
<dbReference type="GO" id="GO:0000785">
    <property type="term" value="C:chromatin"/>
    <property type="evidence" value="ECO:0000314"/>
    <property type="project" value="SGD"/>
</dbReference>
<dbReference type="GO" id="GO:0005829">
    <property type="term" value="C:cytosol"/>
    <property type="evidence" value="ECO:0000314"/>
    <property type="project" value="SGD"/>
</dbReference>
<dbReference type="GO" id="GO:0005634">
    <property type="term" value="C:nucleus"/>
    <property type="evidence" value="ECO:0000314"/>
    <property type="project" value="SGD"/>
</dbReference>
<dbReference type="GO" id="GO:0090575">
    <property type="term" value="C:RNA polymerase II transcription regulator complex"/>
    <property type="evidence" value="ECO:0000353"/>
    <property type="project" value="ComplexPortal"/>
</dbReference>
<dbReference type="GO" id="GO:0090571">
    <property type="term" value="C:RNA polymerase II transcription repressor complex"/>
    <property type="evidence" value="ECO:0000353"/>
    <property type="project" value="ComplexPortal"/>
</dbReference>
<dbReference type="GO" id="GO:0003688">
    <property type="term" value="F:DNA replication origin binding"/>
    <property type="evidence" value="ECO:0000314"/>
    <property type="project" value="SGD"/>
</dbReference>
<dbReference type="GO" id="GO:0001228">
    <property type="term" value="F:DNA-binding transcription activator activity, RNA polymerase II-specific"/>
    <property type="evidence" value="ECO:0000314"/>
    <property type="project" value="SGD"/>
</dbReference>
<dbReference type="GO" id="GO:0000981">
    <property type="term" value="F:DNA-binding transcription factor activity, RNA polymerase II-specific"/>
    <property type="evidence" value="ECO:0000314"/>
    <property type="project" value="SGD"/>
</dbReference>
<dbReference type="GO" id="GO:0001227">
    <property type="term" value="F:DNA-binding transcription repressor activity, RNA polymerase II-specific"/>
    <property type="evidence" value="ECO:0000314"/>
    <property type="project" value="SGD"/>
</dbReference>
<dbReference type="GO" id="GO:0140313">
    <property type="term" value="F:molecular sequestering activity"/>
    <property type="evidence" value="ECO:0000269"/>
    <property type="project" value="DisProt"/>
</dbReference>
<dbReference type="GO" id="GO:0046983">
    <property type="term" value="F:protein dimerization activity"/>
    <property type="evidence" value="ECO:0007669"/>
    <property type="project" value="InterPro"/>
</dbReference>
<dbReference type="GO" id="GO:0000978">
    <property type="term" value="F:RNA polymerase II cis-regulatory region sequence-specific DNA binding"/>
    <property type="evidence" value="ECO:0000314"/>
    <property type="project" value="SGD"/>
</dbReference>
<dbReference type="GO" id="GO:0044377">
    <property type="term" value="F:RNA polymerase II cis-regulatory region sequence-specific DNA binding, bending"/>
    <property type="evidence" value="ECO:0000314"/>
    <property type="project" value="SGD"/>
</dbReference>
<dbReference type="GO" id="GO:0061629">
    <property type="term" value="F:RNA polymerase II-specific DNA-binding transcription factor binding"/>
    <property type="evidence" value="ECO:0000314"/>
    <property type="project" value="SGD"/>
</dbReference>
<dbReference type="GO" id="GO:0043565">
    <property type="term" value="F:sequence-specific DNA binding"/>
    <property type="evidence" value="ECO:0007005"/>
    <property type="project" value="SGD"/>
</dbReference>
<dbReference type="GO" id="GO:0006525">
    <property type="term" value="P:arginine metabolic process"/>
    <property type="evidence" value="ECO:0007669"/>
    <property type="project" value="UniProtKB-KW"/>
</dbReference>
<dbReference type="GO" id="GO:0000086">
    <property type="term" value="P:G2/M transition of mitotic cell cycle"/>
    <property type="evidence" value="ECO:0000315"/>
    <property type="project" value="SGD"/>
</dbReference>
<dbReference type="GO" id="GO:1900082">
    <property type="term" value="P:negative regulation of arginine catabolic process"/>
    <property type="evidence" value="ECO:0000315"/>
    <property type="project" value="SGD"/>
</dbReference>
<dbReference type="GO" id="GO:0000122">
    <property type="term" value="P:negative regulation of transcription by RNA polymerase II"/>
    <property type="evidence" value="ECO:0000314"/>
    <property type="project" value="SGD"/>
</dbReference>
<dbReference type="GO" id="GO:1900080">
    <property type="term" value="P:positive regulation of arginine biosynthetic process"/>
    <property type="evidence" value="ECO:0000314"/>
    <property type="project" value="SGD"/>
</dbReference>
<dbReference type="GO" id="GO:0045944">
    <property type="term" value="P:positive regulation of transcription by RNA polymerase II"/>
    <property type="evidence" value="ECO:0000314"/>
    <property type="project" value="SGD"/>
</dbReference>
<dbReference type="GO" id="GO:0000821">
    <property type="term" value="P:regulation of arginine metabolic process"/>
    <property type="evidence" value="ECO:0000303"/>
    <property type="project" value="ComplexPortal"/>
</dbReference>
<dbReference type="GO" id="GO:0031494">
    <property type="term" value="P:regulation of mating type switching"/>
    <property type="evidence" value="ECO:0000315"/>
    <property type="project" value="SGD"/>
</dbReference>
<dbReference type="GO" id="GO:0007532">
    <property type="term" value="P:regulation of mating-type specific transcription, DNA-templated"/>
    <property type="evidence" value="ECO:0000314"/>
    <property type="project" value="ComplexPortal"/>
</dbReference>
<dbReference type="CDD" id="cd00266">
    <property type="entry name" value="MADS_SRF_like"/>
    <property type="match status" value="1"/>
</dbReference>
<dbReference type="DisProt" id="DP02397"/>
<dbReference type="FunFam" id="3.40.1810.10:FF:000002">
    <property type="entry name" value="Serum response factor b"/>
    <property type="match status" value="1"/>
</dbReference>
<dbReference type="Gene3D" id="3.40.1810.10">
    <property type="entry name" value="Transcription factor, MADS-box"/>
    <property type="match status" value="1"/>
</dbReference>
<dbReference type="InterPro" id="IPR050142">
    <property type="entry name" value="MADS-box/MEF2_TF"/>
</dbReference>
<dbReference type="InterPro" id="IPR033897">
    <property type="entry name" value="SRF-like_MADS-box"/>
</dbReference>
<dbReference type="InterPro" id="IPR002100">
    <property type="entry name" value="TF_MADSbox"/>
</dbReference>
<dbReference type="InterPro" id="IPR036879">
    <property type="entry name" value="TF_MADSbox_sf"/>
</dbReference>
<dbReference type="PANTHER" id="PTHR48019">
    <property type="entry name" value="SERUM RESPONSE FACTOR HOMOLOG"/>
    <property type="match status" value="1"/>
</dbReference>
<dbReference type="Pfam" id="PF00319">
    <property type="entry name" value="SRF-TF"/>
    <property type="match status" value="1"/>
</dbReference>
<dbReference type="PRINTS" id="PR00404">
    <property type="entry name" value="MADSDOMAIN"/>
</dbReference>
<dbReference type="SMART" id="SM00432">
    <property type="entry name" value="MADS"/>
    <property type="match status" value="1"/>
</dbReference>
<dbReference type="SUPFAM" id="SSF55455">
    <property type="entry name" value="SRF-like"/>
    <property type="match status" value="1"/>
</dbReference>
<dbReference type="PROSITE" id="PS00350">
    <property type="entry name" value="MADS_BOX_1"/>
    <property type="match status" value="1"/>
</dbReference>
<dbReference type="PROSITE" id="PS50066">
    <property type="entry name" value="MADS_BOX_2"/>
    <property type="match status" value="1"/>
</dbReference>
<organism>
    <name type="scientific">Saccharomyces cerevisiae (strain ATCC 204508 / S288c)</name>
    <name type="common">Baker's yeast</name>
    <dbReference type="NCBI Taxonomy" id="559292"/>
    <lineage>
        <taxon>Eukaryota</taxon>
        <taxon>Fungi</taxon>
        <taxon>Dikarya</taxon>
        <taxon>Ascomycota</taxon>
        <taxon>Saccharomycotina</taxon>
        <taxon>Saccharomycetes</taxon>
        <taxon>Saccharomycetales</taxon>
        <taxon>Saccharomycetaceae</taxon>
        <taxon>Saccharomyces</taxon>
    </lineage>
</organism>
<reference key="1">
    <citation type="journal article" date="1990" name="Genes Dev.">
        <title>Identification, purification, and cloning of a polypeptide (PRTF/GRM) that binds to mating-specific promoter elements in yeast.</title>
        <authorList>
            <person name="Ammerer G."/>
        </authorList>
    </citation>
    <scope>NUCLEOTIDE SEQUENCE [GENOMIC DNA]</scope>
</reference>
<reference key="2">
    <citation type="journal article" date="1988" name="J. Mol. Biol.">
        <title>Saccharomyces cerevisiae protein involved in plasmid maintenance is necessary for mating of MAT alpha cells.</title>
        <authorList>
            <person name="Passmore S."/>
            <person name="Maine G.T."/>
            <person name="Elble R."/>
            <person name="Christ C."/>
            <person name="Tye B.K."/>
        </authorList>
    </citation>
    <scope>NUCLEOTIDE SEQUENCE [GENOMIC DNA]</scope>
</reference>
<reference key="3">
    <citation type="journal article" date="1987" name="Gene">
        <title>Characterization of two new genes essential for vegetative growth in Saccharomyces cerevisiae: nucleotide sequence determination and chromosome mapping.</title>
        <authorList>
            <person name="Dubois E."/>
            <person name="Bercy J."/>
            <person name="Descamps F."/>
            <person name="Messenguy F."/>
        </authorList>
    </citation>
    <scope>NUCLEOTIDE SEQUENCE [GENOMIC DNA]</scope>
</reference>
<reference key="4">
    <citation type="journal article" date="1997" name="Nature">
        <title>The nucleotide sequence of Saccharomyces cerevisiae chromosome XIII.</title>
        <authorList>
            <person name="Bowman S."/>
            <person name="Churcher C.M."/>
            <person name="Badcock K."/>
            <person name="Brown D."/>
            <person name="Chillingworth T."/>
            <person name="Connor R."/>
            <person name="Dedman K."/>
            <person name="Devlin K."/>
            <person name="Gentles S."/>
            <person name="Hamlin N."/>
            <person name="Hunt S."/>
            <person name="Jagels K."/>
            <person name="Lye G."/>
            <person name="Moule S."/>
            <person name="Odell C."/>
            <person name="Pearson D."/>
            <person name="Rajandream M.A."/>
            <person name="Rice P."/>
            <person name="Skelton J."/>
            <person name="Walsh S.V."/>
            <person name="Whitehead S."/>
            <person name="Barrell B.G."/>
        </authorList>
    </citation>
    <scope>NUCLEOTIDE SEQUENCE [LARGE SCALE GENOMIC DNA]</scope>
    <source>
        <strain>ATCC 204508 / S288c</strain>
    </source>
</reference>
<reference key="5">
    <citation type="journal article" date="2014" name="G3 (Bethesda)">
        <title>The reference genome sequence of Saccharomyces cerevisiae: Then and now.</title>
        <authorList>
            <person name="Engel S.R."/>
            <person name="Dietrich F.S."/>
            <person name="Fisk D.G."/>
            <person name="Binkley G."/>
            <person name="Balakrishnan R."/>
            <person name="Costanzo M.C."/>
            <person name="Dwight S.S."/>
            <person name="Hitz B.C."/>
            <person name="Karra K."/>
            <person name="Nash R.S."/>
            <person name="Weng S."/>
            <person name="Wong E.D."/>
            <person name="Lloyd P."/>
            <person name="Skrzypek M.S."/>
            <person name="Miyasato S.R."/>
            <person name="Simison M."/>
            <person name="Cherry J.M."/>
        </authorList>
    </citation>
    <scope>GENOME REANNOTATION</scope>
    <source>
        <strain>ATCC 204508 / S288c</strain>
    </source>
</reference>
<reference key="6">
    <citation type="journal article" date="2007" name="Genome Res.">
        <title>Approaching a complete repository of sequence-verified protein-encoding clones for Saccharomyces cerevisiae.</title>
        <authorList>
            <person name="Hu Y."/>
            <person name="Rolfs A."/>
            <person name="Bhullar B."/>
            <person name="Murthy T.V.S."/>
            <person name="Zhu C."/>
            <person name="Berger M.F."/>
            <person name="Camargo A.A."/>
            <person name="Kelley F."/>
            <person name="McCarron S."/>
            <person name="Jepson D."/>
            <person name="Richardson A."/>
            <person name="Raphael J."/>
            <person name="Moreira D."/>
            <person name="Taycher E."/>
            <person name="Zuo D."/>
            <person name="Mohr S."/>
            <person name="Kane M.F."/>
            <person name="Williamson J."/>
            <person name="Simpson A.J.G."/>
            <person name="Bulyk M.L."/>
            <person name="Harlow E."/>
            <person name="Marsischky G."/>
            <person name="Kolodner R.D."/>
            <person name="LaBaer J."/>
        </authorList>
    </citation>
    <scope>NUCLEOTIDE SEQUENCE [GENOMIC DNA]</scope>
    <source>
        <strain>ATCC 204508 / S288c</strain>
    </source>
</reference>
<reference key="7">
    <citation type="journal article" date="1991" name="EMBO J.">
        <title>The DNA binding and oligomerization domain of MCM1 is sufficient for its interaction with other regulatory proteins.</title>
        <authorList>
            <person name="Primig M."/>
            <person name="Winkler H."/>
            <person name="Ammerer G."/>
        </authorList>
    </citation>
    <scope>INTERACTION WITH ALPHA1 AND ALPHA2</scope>
</reference>
<reference key="8">
    <citation type="journal article" date="1996" name="Mol. Cell. Biol.">
        <title>The yeast alpha2 and Mcm1 proteins interact through a region similar to a motif found in homeodomain proteins of higher eukaryotes.</title>
        <authorList>
            <person name="Mead J."/>
            <person name="Zhong H."/>
            <person name="Acton T.B."/>
            <person name="Vershon A.K."/>
        </authorList>
    </citation>
    <scope>INTERACTION WITH ALPHA2</scope>
</reference>
<reference key="9">
    <citation type="journal article" date="2000" name="Mol. Microbiol.">
        <title>Recruitment of the yeast MADS-box proteins, ArgRI and Mcm1 by the pleiotropic factor ArgRIII is required for their stability.</title>
        <authorList>
            <person name="El Bakkoury M."/>
            <person name="Dubois E."/>
            <person name="Messenguy F."/>
        </authorList>
    </citation>
    <scope>INTERACTION WITH ARG81 AND ARG82</scope>
</reference>
<reference key="10">
    <citation type="journal article" date="2002" name="Genes Dev.">
        <title>Conserved homeodomain proteins interact with MADS box protein Mcm1 to restrict ECB-dependent transcription to the M/G1 phase of the cell cycle.</title>
        <authorList>
            <person name="Pramila T."/>
            <person name="Miles S."/>
            <person name="GuhaThakurta D."/>
            <person name="Jemiolo D."/>
            <person name="Breeden L.L."/>
        </authorList>
    </citation>
    <scope>INTERACTION WITH YHP1 AND YOX1</scope>
</reference>
<reference key="11">
    <citation type="journal article" date="2003" name="Nature">
        <title>Global analysis of protein expression in yeast.</title>
        <authorList>
            <person name="Ghaemmaghami S."/>
            <person name="Huh W.-K."/>
            <person name="Bower K."/>
            <person name="Howson R.W."/>
            <person name="Belle A."/>
            <person name="Dephoure N."/>
            <person name="O'Shea E.K."/>
            <person name="Weissman J.S."/>
        </authorList>
    </citation>
    <scope>LEVEL OF PROTEIN EXPRESSION [LARGE SCALE ANALYSIS]</scope>
</reference>
<reference key="12">
    <citation type="journal article" date="2008" name="Mol. Cell. Proteomics">
        <title>A multidimensional chromatography technology for in-depth phosphoproteome analysis.</title>
        <authorList>
            <person name="Albuquerque C.P."/>
            <person name="Smolka M.B."/>
            <person name="Payne S.H."/>
            <person name="Bafna V."/>
            <person name="Eng J."/>
            <person name="Zhou H."/>
        </authorList>
    </citation>
    <scope>PHOSPHORYLATION [LARGE SCALE ANALYSIS] AT SER-2</scope>
    <scope>IDENTIFICATION BY MASS SPECTROMETRY [LARGE SCALE ANALYSIS]</scope>
</reference>
<reference key="13">
    <citation type="journal article" date="2009" name="Science">
        <title>Global analysis of Cdk1 substrate phosphorylation sites provides insights into evolution.</title>
        <authorList>
            <person name="Holt L.J."/>
            <person name="Tuch B.B."/>
            <person name="Villen J."/>
            <person name="Johnson A.D."/>
            <person name="Gygi S.P."/>
            <person name="Morgan D.O."/>
        </authorList>
    </citation>
    <scope>PHOSPHORYLATION [LARGE SCALE ANALYSIS] AT SER-144</scope>
    <scope>IDENTIFICATION BY MASS SPECTROMETRY [LARGE SCALE ANALYSIS]</scope>
</reference>
<reference key="14">
    <citation type="journal article" date="2012" name="Proc. Natl. Acad. Sci. U.S.A.">
        <title>N-terminal acetylome analyses and functional insights of the N-terminal acetyltransferase NatB.</title>
        <authorList>
            <person name="Van Damme P."/>
            <person name="Lasa M."/>
            <person name="Polevoda B."/>
            <person name="Gazquez C."/>
            <person name="Elosegui-Artola A."/>
            <person name="Kim D.S."/>
            <person name="De Juan-Pardo E."/>
            <person name="Demeyer K."/>
            <person name="Hole K."/>
            <person name="Larrea E."/>
            <person name="Timmerman E."/>
            <person name="Prieto J."/>
            <person name="Arnesen T."/>
            <person name="Sherman F."/>
            <person name="Gevaert K."/>
            <person name="Aldabe R."/>
        </authorList>
    </citation>
    <scope>ACETYLATION [LARGE SCALE ANALYSIS] AT SER-2</scope>
    <scope>CLEAVAGE OF INITIATOR METHIONINE [LARGE SCALE ANALYSIS]</scope>
    <scope>IDENTIFICATION BY MASS SPECTROMETRY [LARGE SCALE ANALYSIS]</scope>
</reference>
<reference key="15">
    <citation type="journal article" date="1998" name="Nature">
        <title>Crystal structure of the yeast MATalpha2/MCM1/DNA ternary complex.</title>
        <authorList>
            <person name="Tan S."/>
            <person name="Richmond T.J."/>
        </authorList>
    </citation>
    <scope>X-RAY CRYSTALLOGRAPHY (2.25 ANGSTROMS) OF 1-100 IN COMPLEX WITH ALPHA2</scope>
</reference>